<protein>
    <recommendedName>
        <fullName>Probable succinate dehydrogenase [ubiquinone] flavoprotein subunit, mitochondrial</fullName>
        <ecNumber evidence="2">1.3.5.1</ecNumber>
    </recommendedName>
    <alternativeName>
        <fullName>Flavoprotein subunit of complex II</fullName>
        <shortName>FP</shortName>
    </alternativeName>
</protein>
<organism>
    <name type="scientific">Schizosaccharomyces pombe (strain 972 / ATCC 24843)</name>
    <name type="common">Fission yeast</name>
    <dbReference type="NCBI Taxonomy" id="284812"/>
    <lineage>
        <taxon>Eukaryota</taxon>
        <taxon>Fungi</taxon>
        <taxon>Dikarya</taxon>
        <taxon>Ascomycota</taxon>
        <taxon>Taphrinomycotina</taxon>
        <taxon>Schizosaccharomycetes</taxon>
        <taxon>Schizosaccharomycetales</taxon>
        <taxon>Schizosaccharomycetaceae</taxon>
        <taxon>Schizosaccharomyces</taxon>
    </lineage>
</organism>
<feature type="transit peptide" description="Mitochondrion" evidence="6">
    <location>
        <begin position="1"/>
        <end status="unknown"/>
    </location>
</feature>
<feature type="chain" id="PRO_0000010341" description="Probable succinate dehydrogenase [ubiquinone] flavoprotein subunit, mitochondrial">
    <location>
        <begin status="unknown"/>
        <end position="641"/>
    </location>
</feature>
<feature type="active site" description="Proton acceptor" evidence="5">
    <location>
        <position position="333"/>
    </location>
</feature>
<feature type="binding site" evidence="5">
    <location>
        <begin position="61"/>
        <end position="66"/>
    </location>
    <ligand>
        <name>FAD</name>
        <dbReference type="ChEBI" id="CHEBI:57692"/>
    </ligand>
</feature>
<feature type="binding site" evidence="5">
    <location>
        <begin position="84"/>
        <end position="99"/>
    </location>
    <ligand>
        <name>FAD</name>
        <dbReference type="ChEBI" id="CHEBI:57692"/>
    </ligand>
</feature>
<feature type="binding site" evidence="5">
    <location>
        <position position="268"/>
    </location>
    <ligand>
        <name>FAD</name>
        <dbReference type="ChEBI" id="CHEBI:57692"/>
    </ligand>
</feature>
<feature type="binding site" evidence="5">
    <location>
        <position position="289"/>
    </location>
    <ligand>
        <name>substrate</name>
    </ligand>
</feature>
<feature type="binding site" evidence="5">
    <location>
        <position position="301"/>
    </location>
    <ligand>
        <name>substrate</name>
    </ligand>
</feature>
<feature type="binding site" evidence="5">
    <location>
        <position position="400"/>
    </location>
    <ligand>
        <name>substrate</name>
    </ligand>
</feature>
<feature type="binding site" evidence="5">
    <location>
        <position position="434"/>
    </location>
    <ligand>
        <name>FAD</name>
        <dbReference type="ChEBI" id="CHEBI:57692"/>
    </ligand>
</feature>
<feature type="binding site" evidence="5">
    <location>
        <position position="445"/>
    </location>
    <ligand>
        <name>substrate</name>
    </ligand>
</feature>
<feature type="binding site" evidence="5">
    <location>
        <begin position="450"/>
        <end position="451"/>
    </location>
    <ligand>
        <name>FAD</name>
        <dbReference type="ChEBI" id="CHEBI:57692"/>
    </ligand>
</feature>
<feature type="modified residue" description="Tele-8alpha-FAD histidine" evidence="5">
    <location>
        <position position="92"/>
    </location>
</feature>
<feature type="sequence conflict" description="In Ref. 2; BAA13924." evidence="7" ref="2">
    <original>A</original>
    <variation>G</variation>
    <location>
        <position position="214"/>
    </location>
</feature>
<feature type="sequence conflict" description="In Ref. 2; BAA13924." evidence="7" ref="2">
    <original>I</original>
    <variation>L</variation>
    <location>
        <position position="218"/>
    </location>
</feature>
<accession>Q9UTJ7</accession>
<accession>P78912</accession>
<sequence>MLRFRKVAPSLKNGGNLKLFSTSSTLKKIASSQPLRAKQVSTSESVKYPVIDHTYDAIVVGAGGAGLRATFGLAEAGFNTACITKLFPTRSHTVAAQGGINAALGNMTKDDWRWHFYDTVKGSDWLGDQDAIHYMTKEAPKAVLELEHFGVPFSRTKEGKIYQRAFGGQSLEYGKGGQAYRCAAVADRTGHSILHTLYGQSLKHNTNFFIEYFAMDLIMEGGECRGVIAMNLEDGSIHRFRAHKTILATGGYGRAYFSCTSAHTCTGDGNAMVSRAGLPLQDLEFVQFHPTGIYGAGCLITEGCRGEGGYLLNSKGERFMERYAPTAKDLASRDVVSRAMTVEIREGRGVGPEKDHCYLQLSHLPAEILKERLPGISETAAIFAGVDVTKEPIPVLPTVHYNMGGIPTRFTGEVLTIDENGKDKIVPGLYAAGEAACVSVHGGNRLGANSLLDIVVFGRACALHIKDTLEPNTPHKPLAADAGLDSLKFLDQIRTSQGPKHTSEIRLDMQKTMQRDVSVFRMEETLQEGVKNIARVDGTYKDIGIRDRGLIWNTDLVEALELRNLLTCAVQTANAALNRKESRGAHAREDYPERDDKNWIKHTLTWQHKTGDPVTLKYRAVTRTTMDENEVKPVPPFKRVY</sequence>
<keyword id="KW-0249">Electron transport</keyword>
<keyword id="KW-0274">FAD</keyword>
<keyword id="KW-0285">Flavoprotein</keyword>
<keyword id="KW-0472">Membrane</keyword>
<keyword id="KW-0496">Mitochondrion</keyword>
<keyword id="KW-0999">Mitochondrion inner membrane</keyword>
<keyword id="KW-0560">Oxidoreductase</keyword>
<keyword id="KW-1185">Reference proteome</keyword>
<keyword id="KW-0809">Transit peptide</keyword>
<keyword id="KW-0813">Transport</keyword>
<keyword id="KW-0816">Tricarboxylic acid cycle</keyword>
<evidence type="ECO:0000250" key="1"/>
<evidence type="ECO:0000250" key="2">
    <source>
        <dbReference type="UniProtKB" id="P31040"/>
    </source>
</evidence>
<evidence type="ECO:0000250" key="3">
    <source>
        <dbReference type="UniProtKB" id="Q00711"/>
    </source>
</evidence>
<evidence type="ECO:0000250" key="4">
    <source>
        <dbReference type="UniProtKB" id="Q0QF01"/>
    </source>
</evidence>
<evidence type="ECO:0000250" key="5">
    <source>
        <dbReference type="UniProtKB" id="Q9YHT1"/>
    </source>
</evidence>
<evidence type="ECO:0000255" key="6"/>
<evidence type="ECO:0000305" key="7"/>
<proteinExistence type="evidence at transcript level"/>
<comment type="function">
    <text evidence="1">Flavoprotein (FP) subunit of succinate dehydrogenase (SDH) that is involved in complex II of the mitochondrial electron transport chain and is responsible for transferring electrons from succinate to ubiquinone (coenzyme Q).</text>
</comment>
<comment type="catalytic activity">
    <reaction evidence="2">
        <text>a quinone + succinate = fumarate + a quinol</text>
        <dbReference type="Rhea" id="RHEA:40523"/>
        <dbReference type="ChEBI" id="CHEBI:24646"/>
        <dbReference type="ChEBI" id="CHEBI:29806"/>
        <dbReference type="ChEBI" id="CHEBI:30031"/>
        <dbReference type="ChEBI" id="CHEBI:132124"/>
        <dbReference type="EC" id="1.3.5.1"/>
    </reaction>
</comment>
<comment type="cofactor">
    <cofactor evidence="4">
        <name>FAD</name>
        <dbReference type="ChEBI" id="CHEBI:57692"/>
    </cofactor>
</comment>
<comment type="pathway">
    <text evidence="2">Carbohydrate metabolism; tricarboxylic acid cycle; fumarate from succinate (eukaryal route): step 1/1.</text>
</comment>
<comment type="subunit">
    <text evidence="3">Component of complex II composed of four subunits: a flavoprotein (FP), an iron-sulfur protein (IP), and a cytochrome b composed of a large and a small subunit.</text>
</comment>
<comment type="subcellular location">
    <subcellularLocation>
        <location evidence="3">Mitochondrion inner membrane</location>
        <topology evidence="3">Peripheral membrane protein</topology>
        <orientation evidence="3">Matrix side</orientation>
    </subcellularLocation>
</comment>
<comment type="similarity">
    <text evidence="7">Belongs to the FAD-dependent oxidoreductase 2 family. FRD/SDH subfamily.</text>
</comment>
<dbReference type="EC" id="1.3.5.1" evidence="2"/>
<dbReference type="EMBL" id="CU329670">
    <property type="protein sequence ID" value="CAB61213.1"/>
    <property type="molecule type" value="Genomic_DNA"/>
</dbReference>
<dbReference type="EMBL" id="D89263">
    <property type="protein sequence ID" value="BAA13924.1"/>
    <property type="molecule type" value="mRNA"/>
</dbReference>
<dbReference type="PIR" id="T50081">
    <property type="entry name" value="T50081"/>
</dbReference>
<dbReference type="RefSeq" id="NP_594319.1">
    <property type="nucleotide sequence ID" value="NM_001019741.2"/>
</dbReference>
<dbReference type="SMR" id="Q9UTJ7"/>
<dbReference type="BioGRID" id="278186">
    <property type="interactions" value="5"/>
</dbReference>
<dbReference type="ComplexPortal" id="CPX-566">
    <property type="entry name" value="Mitochondrial respiratory chain complex II"/>
</dbReference>
<dbReference type="FunCoup" id="Q9UTJ7">
    <property type="interactions" value="254"/>
</dbReference>
<dbReference type="STRING" id="284812.Q9UTJ7"/>
<dbReference type="iPTMnet" id="Q9UTJ7"/>
<dbReference type="PaxDb" id="4896-SPAC1556.02c.1"/>
<dbReference type="EnsemblFungi" id="SPAC1556.02c.1">
    <property type="protein sequence ID" value="SPAC1556.02c.1:pep"/>
    <property type="gene ID" value="SPAC1556.02c"/>
</dbReference>
<dbReference type="GeneID" id="2541690"/>
<dbReference type="KEGG" id="spo:2541690"/>
<dbReference type="PomBase" id="SPAC1556.02c">
    <property type="gene designation" value="sdh1"/>
</dbReference>
<dbReference type="VEuPathDB" id="FungiDB:SPAC1556.02c"/>
<dbReference type="eggNOG" id="KOG2403">
    <property type="taxonomic scope" value="Eukaryota"/>
</dbReference>
<dbReference type="HOGENOM" id="CLU_014312_6_1_1"/>
<dbReference type="InParanoid" id="Q9UTJ7"/>
<dbReference type="OMA" id="PTGIWRM"/>
<dbReference type="PhylomeDB" id="Q9UTJ7"/>
<dbReference type="Reactome" id="R-SPO-71403">
    <property type="pathway name" value="Citric acid cycle (TCA cycle)"/>
</dbReference>
<dbReference type="Reactome" id="R-SPO-9854311">
    <property type="pathway name" value="Maturation of TCA enzymes and regulation of TCA cycle"/>
</dbReference>
<dbReference type="UniPathway" id="UPA00223">
    <property type="reaction ID" value="UER01006"/>
</dbReference>
<dbReference type="PRO" id="PR:Q9UTJ7"/>
<dbReference type="Proteomes" id="UP000002485">
    <property type="component" value="Chromosome I"/>
</dbReference>
<dbReference type="GO" id="GO:0005743">
    <property type="term" value="C:mitochondrial inner membrane"/>
    <property type="evidence" value="ECO:0000266"/>
    <property type="project" value="ComplexPortal"/>
</dbReference>
<dbReference type="GO" id="GO:0005739">
    <property type="term" value="C:mitochondrion"/>
    <property type="evidence" value="ECO:0007005"/>
    <property type="project" value="PomBase"/>
</dbReference>
<dbReference type="GO" id="GO:0045273">
    <property type="term" value="C:respiratory chain complex II (succinate dehydrogenase)"/>
    <property type="evidence" value="ECO:0000318"/>
    <property type="project" value="GO_Central"/>
</dbReference>
<dbReference type="GO" id="GO:0009055">
    <property type="term" value="F:electron transfer activity"/>
    <property type="evidence" value="ECO:0000318"/>
    <property type="project" value="GO_Central"/>
</dbReference>
<dbReference type="GO" id="GO:0050660">
    <property type="term" value="F:flavin adenine dinucleotide binding"/>
    <property type="evidence" value="ECO:0000318"/>
    <property type="project" value="GO_Central"/>
</dbReference>
<dbReference type="GO" id="GO:0008177">
    <property type="term" value="F:succinate dehydrogenase (quinone) activity"/>
    <property type="evidence" value="ECO:0000318"/>
    <property type="project" value="GO_Central"/>
</dbReference>
<dbReference type="GO" id="GO:0006121">
    <property type="term" value="P:mitochondrial electron transport, succinate to ubiquinone"/>
    <property type="evidence" value="ECO:0000250"/>
    <property type="project" value="PomBase"/>
</dbReference>
<dbReference type="GO" id="GO:0006099">
    <property type="term" value="P:tricarboxylic acid cycle"/>
    <property type="evidence" value="ECO:0000250"/>
    <property type="project" value="PomBase"/>
</dbReference>
<dbReference type="FunFam" id="3.90.700.10:FF:000001">
    <property type="entry name" value="Mitochondrial succinate dehydrogenase flavoprotein subunit"/>
    <property type="match status" value="1"/>
</dbReference>
<dbReference type="FunFam" id="4.10.80.40:FF:000002">
    <property type="entry name" value="Succinate dehydrogenase [ubiquinone] flavoprotein subunit, mitochondrial"/>
    <property type="match status" value="1"/>
</dbReference>
<dbReference type="FunFam" id="3.50.50.60:FF:000482">
    <property type="entry name" value="Succinate dehydrogenase complex, subunit A, flavoprotein (Fp)"/>
    <property type="match status" value="1"/>
</dbReference>
<dbReference type="FunFam" id="1.20.58.100:FF:000001">
    <property type="entry name" value="Succinate dehydrogenase flavoprotein subunit (SdhA)"/>
    <property type="match status" value="1"/>
</dbReference>
<dbReference type="Gene3D" id="3.50.50.60">
    <property type="entry name" value="FAD/NAD(P)-binding domain"/>
    <property type="match status" value="1"/>
</dbReference>
<dbReference type="Gene3D" id="1.20.58.100">
    <property type="entry name" value="Fumarate reductase/succinate dehydrogenase flavoprotein-like, C-terminal domain"/>
    <property type="match status" value="1"/>
</dbReference>
<dbReference type="Gene3D" id="4.10.80.40">
    <property type="entry name" value="succinate dehydrogenase protein domain"/>
    <property type="match status" value="1"/>
</dbReference>
<dbReference type="Gene3D" id="3.90.700.10">
    <property type="entry name" value="Succinate dehydrogenase/fumarate reductase flavoprotein, catalytic domain"/>
    <property type="match status" value="1"/>
</dbReference>
<dbReference type="InterPro" id="IPR003953">
    <property type="entry name" value="FAD-dep_OxRdtase_2_FAD-bd"/>
</dbReference>
<dbReference type="InterPro" id="IPR036188">
    <property type="entry name" value="FAD/NAD-bd_sf"/>
</dbReference>
<dbReference type="InterPro" id="IPR003952">
    <property type="entry name" value="FRD_SDH_FAD_BS"/>
</dbReference>
<dbReference type="InterPro" id="IPR037099">
    <property type="entry name" value="Fum_R/Succ_DH_flav-like_C_sf"/>
</dbReference>
<dbReference type="InterPro" id="IPR015939">
    <property type="entry name" value="Fum_Rdtase/Succ_DH_flav-like_C"/>
</dbReference>
<dbReference type="InterPro" id="IPR030664">
    <property type="entry name" value="SdhA/FrdA/AprA"/>
</dbReference>
<dbReference type="InterPro" id="IPR027477">
    <property type="entry name" value="Succ_DH/fumarate_Rdtase_cat_sf"/>
</dbReference>
<dbReference type="InterPro" id="IPR011281">
    <property type="entry name" value="Succ_DH_flav_su_fwd"/>
</dbReference>
<dbReference type="InterPro" id="IPR014006">
    <property type="entry name" value="Succ_Dhase_FrdA_Gneg"/>
</dbReference>
<dbReference type="NCBIfam" id="TIGR01816">
    <property type="entry name" value="sdhA_forward"/>
    <property type="match status" value="1"/>
</dbReference>
<dbReference type="NCBIfam" id="TIGR01812">
    <property type="entry name" value="sdhA_frdA_Gneg"/>
    <property type="match status" value="1"/>
</dbReference>
<dbReference type="PANTHER" id="PTHR11632">
    <property type="entry name" value="SUCCINATE DEHYDROGENASE 2 FLAVOPROTEIN SUBUNIT"/>
    <property type="match status" value="1"/>
</dbReference>
<dbReference type="PANTHER" id="PTHR11632:SF51">
    <property type="entry name" value="SUCCINATE DEHYDROGENASE [UBIQUINONE] FLAVOPROTEIN SUBUNIT, MITOCHONDRIAL"/>
    <property type="match status" value="1"/>
</dbReference>
<dbReference type="Pfam" id="PF00890">
    <property type="entry name" value="FAD_binding_2"/>
    <property type="match status" value="1"/>
</dbReference>
<dbReference type="Pfam" id="PF02910">
    <property type="entry name" value="Succ_DH_flav_C"/>
    <property type="match status" value="1"/>
</dbReference>
<dbReference type="PIRSF" id="PIRSF000171">
    <property type="entry name" value="SDHA_APRA_LASPO"/>
    <property type="match status" value="1"/>
</dbReference>
<dbReference type="SUPFAM" id="SSF51905">
    <property type="entry name" value="FAD/NAD(P)-binding domain"/>
    <property type="match status" value="1"/>
</dbReference>
<dbReference type="SUPFAM" id="SSF46977">
    <property type="entry name" value="Succinate dehydrogenase/fumarate reductase flavoprotein C-terminal domain"/>
    <property type="match status" value="1"/>
</dbReference>
<dbReference type="SUPFAM" id="SSF56425">
    <property type="entry name" value="Succinate dehydrogenase/fumarate reductase flavoprotein, catalytic domain"/>
    <property type="match status" value="1"/>
</dbReference>
<dbReference type="PROSITE" id="PS00504">
    <property type="entry name" value="FRD_SDH_FAD_BINDING"/>
    <property type="match status" value="1"/>
</dbReference>
<name>SDHA_SCHPO</name>
<reference key="1">
    <citation type="journal article" date="2002" name="Nature">
        <title>The genome sequence of Schizosaccharomyces pombe.</title>
        <authorList>
            <person name="Wood V."/>
            <person name="Gwilliam R."/>
            <person name="Rajandream M.A."/>
            <person name="Lyne M.H."/>
            <person name="Lyne R."/>
            <person name="Stewart A."/>
            <person name="Sgouros J.G."/>
            <person name="Peat N."/>
            <person name="Hayles J."/>
            <person name="Baker S.G."/>
            <person name="Basham D."/>
            <person name="Bowman S."/>
            <person name="Brooks K."/>
            <person name="Brown D."/>
            <person name="Brown S."/>
            <person name="Chillingworth T."/>
            <person name="Churcher C.M."/>
            <person name="Collins M."/>
            <person name="Connor R."/>
            <person name="Cronin A."/>
            <person name="Davis P."/>
            <person name="Feltwell T."/>
            <person name="Fraser A."/>
            <person name="Gentles S."/>
            <person name="Goble A."/>
            <person name="Hamlin N."/>
            <person name="Harris D.E."/>
            <person name="Hidalgo J."/>
            <person name="Hodgson G."/>
            <person name="Holroyd S."/>
            <person name="Hornsby T."/>
            <person name="Howarth S."/>
            <person name="Huckle E.J."/>
            <person name="Hunt S."/>
            <person name="Jagels K."/>
            <person name="James K.D."/>
            <person name="Jones L."/>
            <person name="Jones M."/>
            <person name="Leather S."/>
            <person name="McDonald S."/>
            <person name="McLean J."/>
            <person name="Mooney P."/>
            <person name="Moule S."/>
            <person name="Mungall K.L."/>
            <person name="Murphy L.D."/>
            <person name="Niblett D."/>
            <person name="Odell C."/>
            <person name="Oliver K."/>
            <person name="O'Neil S."/>
            <person name="Pearson D."/>
            <person name="Quail M.A."/>
            <person name="Rabbinowitsch E."/>
            <person name="Rutherford K.M."/>
            <person name="Rutter S."/>
            <person name="Saunders D."/>
            <person name="Seeger K."/>
            <person name="Sharp S."/>
            <person name="Skelton J."/>
            <person name="Simmonds M.N."/>
            <person name="Squares R."/>
            <person name="Squares S."/>
            <person name="Stevens K."/>
            <person name="Taylor K."/>
            <person name="Taylor R.G."/>
            <person name="Tivey A."/>
            <person name="Walsh S.V."/>
            <person name="Warren T."/>
            <person name="Whitehead S."/>
            <person name="Woodward J.R."/>
            <person name="Volckaert G."/>
            <person name="Aert R."/>
            <person name="Robben J."/>
            <person name="Grymonprez B."/>
            <person name="Weltjens I."/>
            <person name="Vanstreels E."/>
            <person name="Rieger M."/>
            <person name="Schaefer M."/>
            <person name="Mueller-Auer S."/>
            <person name="Gabel C."/>
            <person name="Fuchs M."/>
            <person name="Duesterhoeft A."/>
            <person name="Fritzc C."/>
            <person name="Holzer E."/>
            <person name="Moestl D."/>
            <person name="Hilbert H."/>
            <person name="Borzym K."/>
            <person name="Langer I."/>
            <person name="Beck A."/>
            <person name="Lehrach H."/>
            <person name="Reinhardt R."/>
            <person name="Pohl T.M."/>
            <person name="Eger P."/>
            <person name="Zimmermann W."/>
            <person name="Wedler H."/>
            <person name="Wambutt R."/>
            <person name="Purnelle B."/>
            <person name="Goffeau A."/>
            <person name="Cadieu E."/>
            <person name="Dreano S."/>
            <person name="Gloux S."/>
            <person name="Lelaure V."/>
            <person name="Mottier S."/>
            <person name="Galibert F."/>
            <person name="Aves S.J."/>
            <person name="Xiang Z."/>
            <person name="Hunt C."/>
            <person name="Moore K."/>
            <person name="Hurst S.M."/>
            <person name="Lucas M."/>
            <person name="Rochet M."/>
            <person name="Gaillardin C."/>
            <person name="Tallada V.A."/>
            <person name="Garzon A."/>
            <person name="Thode G."/>
            <person name="Daga R.R."/>
            <person name="Cruzado L."/>
            <person name="Jimenez J."/>
            <person name="Sanchez M."/>
            <person name="del Rey F."/>
            <person name="Benito J."/>
            <person name="Dominguez A."/>
            <person name="Revuelta J.L."/>
            <person name="Moreno S."/>
            <person name="Armstrong J."/>
            <person name="Forsburg S.L."/>
            <person name="Cerutti L."/>
            <person name="Lowe T."/>
            <person name="McCombie W.R."/>
            <person name="Paulsen I."/>
            <person name="Potashkin J."/>
            <person name="Shpakovski G.V."/>
            <person name="Ussery D."/>
            <person name="Barrell B.G."/>
            <person name="Nurse P."/>
        </authorList>
    </citation>
    <scope>NUCLEOTIDE SEQUENCE [LARGE SCALE GENOMIC DNA]</scope>
    <source>
        <strain>972 / ATCC 24843</strain>
    </source>
</reference>
<reference key="2">
    <citation type="journal article" date="1997" name="DNA Res.">
        <title>Identification of open reading frames in Schizosaccharomyces pombe cDNAs.</title>
        <authorList>
            <person name="Yoshioka S."/>
            <person name="Kato K."/>
            <person name="Nakai K."/>
            <person name="Okayama H."/>
            <person name="Nojima H."/>
        </authorList>
    </citation>
    <scope>NUCLEOTIDE SEQUENCE [LARGE SCALE MRNA] OF 155-641</scope>
    <source>
        <strain>PR745</strain>
    </source>
</reference>
<gene>
    <name type="primary">sdh1</name>
    <name type="ORF">SPAC1556.02c</name>
</gene>